<evidence type="ECO:0000255" key="1">
    <source>
        <dbReference type="HAMAP-Rule" id="MF_01290"/>
    </source>
</evidence>
<comment type="function">
    <text evidence="1">Catalyzes the reversible retro-aldol cleavage of 2-keto-3-deoxy-L-rhamnonate (KDR) to pyruvate and lactaldehyde.</text>
</comment>
<comment type="catalytic activity">
    <reaction evidence="1">
        <text>2-dehydro-3-deoxy-L-rhamnonate = (S)-lactaldehyde + pyruvate</text>
        <dbReference type="Rhea" id="RHEA:25784"/>
        <dbReference type="ChEBI" id="CHEBI:15361"/>
        <dbReference type="ChEBI" id="CHEBI:18041"/>
        <dbReference type="ChEBI" id="CHEBI:58371"/>
        <dbReference type="EC" id="4.1.2.53"/>
    </reaction>
</comment>
<comment type="cofactor">
    <cofactor evidence="1">
        <name>Mg(2+)</name>
        <dbReference type="ChEBI" id="CHEBI:18420"/>
    </cofactor>
    <text evidence="1">Binds 1 Mg(2+) ion per subunit.</text>
</comment>
<comment type="subunit">
    <text evidence="1">Homohexamer.</text>
</comment>
<comment type="similarity">
    <text evidence="1">Belongs to the HpcH/HpaI aldolase family. KDR aldolase subfamily.</text>
</comment>
<organism>
    <name type="scientific">Escherichia coli O9:H4 (strain HS)</name>
    <dbReference type="NCBI Taxonomy" id="331112"/>
    <lineage>
        <taxon>Bacteria</taxon>
        <taxon>Pseudomonadati</taxon>
        <taxon>Pseudomonadota</taxon>
        <taxon>Gammaproteobacteria</taxon>
        <taxon>Enterobacterales</taxon>
        <taxon>Enterobacteriaceae</taxon>
        <taxon>Escherichia</taxon>
    </lineage>
</organism>
<reference key="1">
    <citation type="journal article" date="2008" name="J. Bacteriol.">
        <title>The pangenome structure of Escherichia coli: comparative genomic analysis of E. coli commensal and pathogenic isolates.</title>
        <authorList>
            <person name="Rasko D.A."/>
            <person name="Rosovitz M.J."/>
            <person name="Myers G.S.A."/>
            <person name="Mongodin E.F."/>
            <person name="Fricke W.F."/>
            <person name="Gajer P."/>
            <person name="Crabtree J."/>
            <person name="Sebaihia M."/>
            <person name="Thomson N.R."/>
            <person name="Chaudhuri R."/>
            <person name="Henderson I.R."/>
            <person name="Sperandio V."/>
            <person name="Ravel J."/>
        </authorList>
    </citation>
    <scope>NUCLEOTIDE SEQUENCE [LARGE SCALE GENOMIC DNA]</scope>
    <source>
        <strain>HS</strain>
    </source>
</reference>
<sequence>MNALLSNPFKERLRKGEVQIGLWLSSTTAYMAEIAATSGYDWLLIDGEHAPNTIQDLYHQLQAVAPYASQPVIRPVEGSKPLIKQVLDIGAQTLLIPMVDTAEQARQVVSATRYPPYGERGVGASVARAARWGRIENYMAQVNDSLCLLVQVESKTALDNLDEILDVEGIDGVFIGPADLSASLGYPDNAGHPEVQRIIETSIRRIRAAGKAAGFLAVAPDMAQQCLAWGANFVAVGVDTMLYSDALDQRLAMFKSGKNGPRIKGSY</sequence>
<dbReference type="EC" id="4.1.2.53" evidence="1"/>
<dbReference type="EMBL" id="CP000802">
    <property type="protein sequence ID" value="ABV06665.1"/>
    <property type="molecule type" value="Genomic_DNA"/>
</dbReference>
<dbReference type="SMR" id="A8A2B1"/>
<dbReference type="KEGG" id="ecx:EcHS_A2387"/>
<dbReference type="HOGENOM" id="CLU_059964_1_0_6"/>
<dbReference type="GO" id="GO:0005737">
    <property type="term" value="C:cytoplasm"/>
    <property type="evidence" value="ECO:0007669"/>
    <property type="project" value="TreeGrafter"/>
</dbReference>
<dbReference type="GO" id="GO:0106099">
    <property type="term" value="F:2-keto-3-deoxy-L-rhamnonate aldolase activity"/>
    <property type="evidence" value="ECO:0007669"/>
    <property type="project" value="UniProtKB-EC"/>
</dbReference>
<dbReference type="GO" id="GO:0000287">
    <property type="term" value="F:magnesium ion binding"/>
    <property type="evidence" value="ECO:0007669"/>
    <property type="project" value="UniProtKB-UniRule"/>
</dbReference>
<dbReference type="FunFam" id="3.20.20.60:FF:000004">
    <property type="entry name" value="5-keto-4-deoxy-D-glucarate aldolase"/>
    <property type="match status" value="1"/>
</dbReference>
<dbReference type="Gene3D" id="3.20.20.60">
    <property type="entry name" value="Phosphoenolpyruvate-binding domains"/>
    <property type="match status" value="1"/>
</dbReference>
<dbReference type="HAMAP" id="MF_01290">
    <property type="entry name" value="KDR_aldolase"/>
    <property type="match status" value="1"/>
</dbReference>
<dbReference type="InterPro" id="IPR005000">
    <property type="entry name" value="Aldolase/citrate-lyase_domain"/>
</dbReference>
<dbReference type="InterPro" id="IPR050251">
    <property type="entry name" value="HpcH-HpaI_aldolase"/>
</dbReference>
<dbReference type="InterPro" id="IPR023593">
    <property type="entry name" value="KDR_aldolase"/>
</dbReference>
<dbReference type="InterPro" id="IPR015813">
    <property type="entry name" value="Pyrv/PenolPyrv_kinase-like_dom"/>
</dbReference>
<dbReference type="InterPro" id="IPR040442">
    <property type="entry name" value="Pyrv_kinase-like_dom_sf"/>
</dbReference>
<dbReference type="NCBIfam" id="NF007521">
    <property type="entry name" value="PRK10128.1"/>
    <property type="match status" value="1"/>
</dbReference>
<dbReference type="PANTHER" id="PTHR30502">
    <property type="entry name" value="2-KETO-3-DEOXY-L-RHAMNONATE ALDOLASE"/>
    <property type="match status" value="1"/>
</dbReference>
<dbReference type="PANTHER" id="PTHR30502:SF5">
    <property type="entry name" value="2-KETO-3-DEOXY-L-RHAMNONATE ALDOLASE"/>
    <property type="match status" value="1"/>
</dbReference>
<dbReference type="Pfam" id="PF03328">
    <property type="entry name" value="HpcH_HpaI"/>
    <property type="match status" value="1"/>
</dbReference>
<dbReference type="SUPFAM" id="SSF51621">
    <property type="entry name" value="Phosphoenolpyruvate/pyruvate domain"/>
    <property type="match status" value="1"/>
</dbReference>
<feature type="chain" id="PRO_0000353165" description="2-keto-3-deoxy-L-rhamnonate aldolase">
    <location>
        <begin position="1"/>
        <end position="267"/>
    </location>
</feature>
<feature type="active site" description="Proton acceptor" evidence="1">
    <location>
        <position position="49"/>
    </location>
</feature>
<feature type="binding site" evidence="1">
    <location>
        <position position="151"/>
    </location>
    <ligand>
        <name>substrate</name>
    </ligand>
</feature>
<feature type="binding site" evidence="1">
    <location>
        <position position="153"/>
    </location>
    <ligand>
        <name>Mg(2+)</name>
        <dbReference type="ChEBI" id="CHEBI:18420"/>
    </ligand>
</feature>
<feature type="binding site" evidence="1">
    <location>
        <position position="178"/>
    </location>
    <ligand>
        <name>substrate</name>
    </ligand>
</feature>
<feature type="binding site" evidence="1">
    <location>
        <position position="179"/>
    </location>
    <ligand>
        <name>Mg(2+)</name>
        <dbReference type="ChEBI" id="CHEBI:18420"/>
    </ligand>
</feature>
<feature type="binding site" evidence="1">
    <location>
        <position position="179"/>
    </location>
    <ligand>
        <name>substrate</name>
    </ligand>
</feature>
<feature type="site" description="Transition state stabilizer" evidence="1">
    <location>
        <position position="74"/>
    </location>
</feature>
<feature type="site" description="Increases basicity of active site His" evidence="1">
    <location>
        <position position="88"/>
    </location>
</feature>
<keyword id="KW-0456">Lyase</keyword>
<keyword id="KW-0460">Magnesium</keyword>
<keyword id="KW-0479">Metal-binding</keyword>
<proteinExistence type="inferred from homology"/>
<gene>
    <name evidence="1" type="primary">rhmA</name>
    <name type="ordered locus">EcHS_A2387</name>
</gene>
<accession>A8A2B1</accession>
<protein>
    <recommendedName>
        <fullName evidence="1">2-keto-3-deoxy-L-rhamnonate aldolase</fullName>
        <shortName evidence="1">KDR aldolase</shortName>
        <ecNumber evidence="1">4.1.2.53</ecNumber>
    </recommendedName>
    <alternativeName>
        <fullName evidence="1">2-dehydro-3-deoxyrhamnonate aldolase</fullName>
    </alternativeName>
</protein>
<name>RHMA_ECOHS</name>